<reference key="1">
    <citation type="journal article" date="2011" name="J. Bacteriol.">
        <title>Complete genome sequence of the metabolically versatile plant growth-promoting endophyte, Variovorax paradoxus S110.</title>
        <authorList>
            <person name="Han J.I."/>
            <person name="Choi H.K."/>
            <person name="Lee S.W."/>
            <person name="Orwin P.M."/>
            <person name="Kim J."/>
            <person name="Laroe S.L."/>
            <person name="Kim T.G."/>
            <person name="O'Neil J."/>
            <person name="Leadbetter J.R."/>
            <person name="Lee S.Y."/>
            <person name="Hur C.G."/>
            <person name="Spain J.C."/>
            <person name="Ovchinnikova G."/>
            <person name="Goodwin L."/>
            <person name="Han C."/>
        </authorList>
    </citation>
    <scope>NUCLEOTIDE SEQUENCE [LARGE SCALE GENOMIC DNA]</scope>
    <source>
        <strain>S110</strain>
    </source>
</reference>
<keyword id="KW-0687">Ribonucleoprotein</keyword>
<keyword id="KW-0689">Ribosomal protein</keyword>
<protein>
    <recommendedName>
        <fullName evidence="1">Large ribosomal subunit protein bL35</fullName>
    </recommendedName>
    <alternativeName>
        <fullName evidence="3">50S ribosomal protein L35</fullName>
    </alternativeName>
</protein>
<sequence length="67" mass="7482">MPKMKTKSSAKKRFRVRPGGTVKRGQAFKRHILTKKTTKNKRHLRGAVAVHETNMVSVAAMLPGRGI</sequence>
<organism>
    <name type="scientific">Variovorax paradoxus (strain S110)</name>
    <dbReference type="NCBI Taxonomy" id="543728"/>
    <lineage>
        <taxon>Bacteria</taxon>
        <taxon>Pseudomonadati</taxon>
        <taxon>Pseudomonadota</taxon>
        <taxon>Betaproteobacteria</taxon>
        <taxon>Burkholderiales</taxon>
        <taxon>Comamonadaceae</taxon>
        <taxon>Variovorax</taxon>
    </lineage>
</organism>
<evidence type="ECO:0000255" key="1">
    <source>
        <dbReference type="HAMAP-Rule" id="MF_00514"/>
    </source>
</evidence>
<evidence type="ECO:0000256" key="2">
    <source>
        <dbReference type="SAM" id="MobiDB-lite"/>
    </source>
</evidence>
<evidence type="ECO:0000305" key="3"/>
<feature type="chain" id="PRO_1000211716" description="Large ribosomal subunit protein bL35">
    <location>
        <begin position="1"/>
        <end position="67"/>
    </location>
</feature>
<feature type="region of interest" description="Disordered" evidence="2">
    <location>
        <begin position="1"/>
        <end position="23"/>
    </location>
</feature>
<feature type="compositionally biased region" description="Basic residues" evidence="2">
    <location>
        <begin position="1"/>
        <end position="16"/>
    </location>
</feature>
<proteinExistence type="inferred from homology"/>
<comment type="similarity">
    <text evidence="1">Belongs to the bacterial ribosomal protein bL35 family.</text>
</comment>
<accession>C5CUU4</accession>
<name>RL35_VARPS</name>
<gene>
    <name evidence="1" type="primary">rpmI</name>
    <name type="ordered locus">Vapar_1872</name>
</gene>
<dbReference type="EMBL" id="CP001635">
    <property type="protein sequence ID" value="ACS18522.1"/>
    <property type="molecule type" value="Genomic_DNA"/>
</dbReference>
<dbReference type="SMR" id="C5CUU4"/>
<dbReference type="STRING" id="543728.Vapar_1872"/>
<dbReference type="KEGG" id="vap:Vapar_1872"/>
<dbReference type="eggNOG" id="COG0291">
    <property type="taxonomic scope" value="Bacteria"/>
</dbReference>
<dbReference type="HOGENOM" id="CLU_169643_4_3_4"/>
<dbReference type="OrthoDB" id="47476at2"/>
<dbReference type="GO" id="GO:0022625">
    <property type="term" value="C:cytosolic large ribosomal subunit"/>
    <property type="evidence" value="ECO:0007669"/>
    <property type="project" value="TreeGrafter"/>
</dbReference>
<dbReference type="GO" id="GO:0003735">
    <property type="term" value="F:structural constituent of ribosome"/>
    <property type="evidence" value="ECO:0007669"/>
    <property type="project" value="InterPro"/>
</dbReference>
<dbReference type="GO" id="GO:0006412">
    <property type="term" value="P:translation"/>
    <property type="evidence" value="ECO:0007669"/>
    <property type="project" value="UniProtKB-UniRule"/>
</dbReference>
<dbReference type="FunFam" id="4.10.410.60:FF:000001">
    <property type="entry name" value="50S ribosomal protein L35"/>
    <property type="match status" value="1"/>
</dbReference>
<dbReference type="Gene3D" id="4.10.410.60">
    <property type="match status" value="1"/>
</dbReference>
<dbReference type="HAMAP" id="MF_00514">
    <property type="entry name" value="Ribosomal_bL35"/>
    <property type="match status" value="1"/>
</dbReference>
<dbReference type="InterPro" id="IPR001706">
    <property type="entry name" value="Ribosomal_bL35"/>
</dbReference>
<dbReference type="InterPro" id="IPR021137">
    <property type="entry name" value="Ribosomal_bL35-like"/>
</dbReference>
<dbReference type="InterPro" id="IPR018265">
    <property type="entry name" value="Ribosomal_bL35_CS"/>
</dbReference>
<dbReference type="InterPro" id="IPR037229">
    <property type="entry name" value="Ribosomal_bL35_sf"/>
</dbReference>
<dbReference type="NCBIfam" id="TIGR00001">
    <property type="entry name" value="rpmI_bact"/>
    <property type="match status" value="1"/>
</dbReference>
<dbReference type="PANTHER" id="PTHR33343">
    <property type="entry name" value="54S RIBOSOMAL PROTEIN BL35M"/>
    <property type="match status" value="1"/>
</dbReference>
<dbReference type="PANTHER" id="PTHR33343:SF1">
    <property type="entry name" value="LARGE RIBOSOMAL SUBUNIT PROTEIN BL35M"/>
    <property type="match status" value="1"/>
</dbReference>
<dbReference type="Pfam" id="PF01632">
    <property type="entry name" value="Ribosomal_L35p"/>
    <property type="match status" value="1"/>
</dbReference>
<dbReference type="PRINTS" id="PR00064">
    <property type="entry name" value="RIBOSOMALL35"/>
</dbReference>
<dbReference type="SUPFAM" id="SSF143034">
    <property type="entry name" value="L35p-like"/>
    <property type="match status" value="1"/>
</dbReference>
<dbReference type="PROSITE" id="PS00936">
    <property type="entry name" value="RIBOSOMAL_L35"/>
    <property type="match status" value="1"/>
</dbReference>